<sequence>MSIVMQLQDVAESTRLGPLSGEVRAGEILHLVGPNGAGKSTLLARMAGMTSGKGSIQFAGQPLEAWSATKLALHRAYLSQQQTPPFAMPVWHYLTLHQHDKTRTELLNDVAGALALDDKLGRSTNQLSGGEWQRVRLAAVVLQITPQANPAGQLLLLDEPMNSLDVAQQSALDKILSALCQQGLAIVMSSHDLNHTLRHAHRAWLLKGGKMLASGRREEVLTPPNLAQAYGMNFRRLDIEGHRMLISTI</sequence>
<dbReference type="EC" id="7.6.2.8" evidence="1"/>
<dbReference type="EMBL" id="CP000038">
    <property type="protein sequence ID" value="AAZ88155.1"/>
    <property type="molecule type" value="Genomic_DNA"/>
</dbReference>
<dbReference type="RefSeq" id="WP_000029466.1">
    <property type="nucleotide sequence ID" value="NC_007384.1"/>
</dbReference>
<dbReference type="SMR" id="Q3Z257"/>
<dbReference type="GeneID" id="93775873"/>
<dbReference type="KEGG" id="ssn:SSON_1449"/>
<dbReference type="HOGENOM" id="CLU_000604_1_11_6"/>
<dbReference type="Proteomes" id="UP000002529">
    <property type="component" value="Chromosome"/>
</dbReference>
<dbReference type="GO" id="GO:0005886">
    <property type="term" value="C:plasma membrane"/>
    <property type="evidence" value="ECO:0007669"/>
    <property type="project" value="UniProtKB-SubCell"/>
</dbReference>
<dbReference type="GO" id="GO:0015420">
    <property type="term" value="F:ABC-type vitamin B12 transporter activity"/>
    <property type="evidence" value="ECO:0007669"/>
    <property type="project" value="UniProtKB-UniRule"/>
</dbReference>
<dbReference type="GO" id="GO:0005524">
    <property type="term" value="F:ATP binding"/>
    <property type="evidence" value="ECO:0007669"/>
    <property type="project" value="UniProtKB-KW"/>
</dbReference>
<dbReference type="GO" id="GO:0016887">
    <property type="term" value="F:ATP hydrolysis activity"/>
    <property type="evidence" value="ECO:0007669"/>
    <property type="project" value="InterPro"/>
</dbReference>
<dbReference type="CDD" id="cd03214">
    <property type="entry name" value="ABC_Iron-Siderophores_B12_Hemin"/>
    <property type="match status" value="1"/>
</dbReference>
<dbReference type="FunFam" id="3.40.50.300:FF:000462">
    <property type="entry name" value="Vitamin B12 import ATP-binding protein BtuD"/>
    <property type="match status" value="1"/>
</dbReference>
<dbReference type="Gene3D" id="3.40.50.300">
    <property type="entry name" value="P-loop containing nucleotide triphosphate hydrolases"/>
    <property type="match status" value="1"/>
</dbReference>
<dbReference type="HAMAP" id="MF_01005">
    <property type="entry name" value="BtuD"/>
    <property type="match status" value="1"/>
</dbReference>
<dbReference type="InterPro" id="IPR003593">
    <property type="entry name" value="AAA+_ATPase"/>
</dbReference>
<dbReference type="InterPro" id="IPR003439">
    <property type="entry name" value="ABC_transporter-like_ATP-bd"/>
</dbReference>
<dbReference type="InterPro" id="IPR017871">
    <property type="entry name" value="ABC_transporter-like_CS"/>
</dbReference>
<dbReference type="InterPro" id="IPR023693">
    <property type="entry name" value="ABC_transptr_BtuD"/>
</dbReference>
<dbReference type="InterPro" id="IPR050153">
    <property type="entry name" value="Metal_Ion_Import_ABC"/>
</dbReference>
<dbReference type="InterPro" id="IPR027417">
    <property type="entry name" value="P-loop_NTPase"/>
</dbReference>
<dbReference type="NCBIfam" id="NF002981">
    <property type="entry name" value="PRK03695.1"/>
    <property type="match status" value="1"/>
</dbReference>
<dbReference type="PANTHER" id="PTHR42734">
    <property type="entry name" value="METAL TRANSPORT SYSTEM ATP-BINDING PROTEIN TM_0124-RELATED"/>
    <property type="match status" value="1"/>
</dbReference>
<dbReference type="PANTHER" id="PTHR42734:SF18">
    <property type="entry name" value="VITAMIN B12 IMPORT ATP-BINDING PROTEIN BTUD"/>
    <property type="match status" value="1"/>
</dbReference>
<dbReference type="Pfam" id="PF00005">
    <property type="entry name" value="ABC_tran"/>
    <property type="match status" value="1"/>
</dbReference>
<dbReference type="SMART" id="SM00382">
    <property type="entry name" value="AAA"/>
    <property type="match status" value="1"/>
</dbReference>
<dbReference type="SUPFAM" id="SSF52540">
    <property type="entry name" value="P-loop containing nucleoside triphosphate hydrolases"/>
    <property type="match status" value="1"/>
</dbReference>
<dbReference type="PROSITE" id="PS00211">
    <property type="entry name" value="ABC_TRANSPORTER_1"/>
    <property type="match status" value="1"/>
</dbReference>
<dbReference type="PROSITE" id="PS50893">
    <property type="entry name" value="ABC_TRANSPORTER_2"/>
    <property type="match status" value="1"/>
</dbReference>
<protein>
    <recommendedName>
        <fullName evidence="1">Vitamin B12 import ATP-binding protein BtuD</fullName>
        <ecNumber evidence="1">7.6.2.8</ecNumber>
    </recommendedName>
    <alternativeName>
        <fullName evidence="1">Vitamin B12-transporting ATPase</fullName>
    </alternativeName>
</protein>
<feature type="chain" id="PRO_1000083968" description="Vitamin B12 import ATP-binding protein BtuD">
    <location>
        <begin position="1"/>
        <end position="249"/>
    </location>
</feature>
<feature type="domain" description="ABC transporter" evidence="1">
    <location>
        <begin position="1"/>
        <end position="233"/>
    </location>
</feature>
<feature type="binding site" evidence="1">
    <location>
        <begin position="33"/>
        <end position="40"/>
    </location>
    <ligand>
        <name>ATP</name>
        <dbReference type="ChEBI" id="CHEBI:30616"/>
    </ligand>
</feature>
<name>BTUD_SHISS</name>
<gene>
    <name evidence="1" type="primary">btuD</name>
    <name type="ordered locus">SSON_1449</name>
</gene>
<reference key="1">
    <citation type="journal article" date="2005" name="Nucleic Acids Res.">
        <title>Genome dynamics and diversity of Shigella species, the etiologic agents of bacillary dysentery.</title>
        <authorList>
            <person name="Yang F."/>
            <person name="Yang J."/>
            <person name="Zhang X."/>
            <person name="Chen L."/>
            <person name="Jiang Y."/>
            <person name="Yan Y."/>
            <person name="Tang X."/>
            <person name="Wang J."/>
            <person name="Xiong Z."/>
            <person name="Dong J."/>
            <person name="Xue Y."/>
            <person name="Zhu Y."/>
            <person name="Xu X."/>
            <person name="Sun L."/>
            <person name="Chen S."/>
            <person name="Nie H."/>
            <person name="Peng J."/>
            <person name="Xu J."/>
            <person name="Wang Y."/>
            <person name="Yuan Z."/>
            <person name="Wen Y."/>
            <person name="Yao Z."/>
            <person name="Shen Y."/>
            <person name="Qiang B."/>
            <person name="Hou Y."/>
            <person name="Yu J."/>
            <person name="Jin Q."/>
        </authorList>
    </citation>
    <scope>NUCLEOTIDE SEQUENCE [LARGE SCALE GENOMIC DNA]</scope>
    <source>
        <strain>Ss046</strain>
    </source>
</reference>
<accession>Q3Z257</accession>
<keyword id="KW-0067">ATP-binding</keyword>
<keyword id="KW-0997">Cell inner membrane</keyword>
<keyword id="KW-1003">Cell membrane</keyword>
<keyword id="KW-0472">Membrane</keyword>
<keyword id="KW-0547">Nucleotide-binding</keyword>
<keyword id="KW-1185">Reference proteome</keyword>
<keyword id="KW-1278">Translocase</keyword>
<keyword id="KW-0813">Transport</keyword>
<proteinExistence type="inferred from homology"/>
<evidence type="ECO:0000255" key="1">
    <source>
        <dbReference type="HAMAP-Rule" id="MF_01005"/>
    </source>
</evidence>
<comment type="function">
    <text evidence="1">Part of the ABC transporter complex BtuCDF involved in vitamin B12 import. Responsible for energy coupling to the transport system.</text>
</comment>
<comment type="catalytic activity">
    <reaction evidence="1">
        <text>an R-cob(III)alamin(out) + ATP + H2O = an R-cob(III)alamin(in) + ADP + phosphate + H(+)</text>
        <dbReference type="Rhea" id="RHEA:17873"/>
        <dbReference type="ChEBI" id="CHEBI:15377"/>
        <dbReference type="ChEBI" id="CHEBI:15378"/>
        <dbReference type="ChEBI" id="CHEBI:30616"/>
        <dbReference type="ChEBI" id="CHEBI:43474"/>
        <dbReference type="ChEBI" id="CHEBI:140785"/>
        <dbReference type="ChEBI" id="CHEBI:456216"/>
        <dbReference type="EC" id="7.6.2.8"/>
    </reaction>
</comment>
<comment type="subunit">
    <text evidence="1">The complex is composed of two ATP-binding proteins (BtuD), two transmembrane proteins (BtuC) and a solute-binding protein (BtuF).</text>
</comment>
<comment type="subcellular location">
    <subcellularLocation>
        <location evidence="1">Cell inner membrane</location>
        <topology evidence="1">Peripheral membrane protein</topology>
    </subcellularLocation>
</comment>
<comment type="similarity">
    <text evidence="1">Belongs to the ABC transporter superfamily. Vitamin B12 importer (TC 3.A.1.13.1) family.</text>
</comment>
<organism>
    <name type="scientific">Shigella sonnei (strain Ss046)</name>
    <dbReference type="NCBI Taxonomy" id="300269"/>
    <lineage>
        <taxon>Bacteria</taxon>
        <taxon>Pseudomonadati</taxon>
        <taxon>Pseudomonadota</taxon>
        <taxon>Gammaproteobacteria</taxon>
        <taxon>Enterobacterales</taxon>
        <taxon>Enterobacteriaceae</taxon>
        <taxon>Shigella</taxon>
    </lineage>
</organism>